<dbReference type="EMBL" id="AE002098">
    <property type="protein sequence ID" value="AAF42128.1"/>
    <property type="molecule type" value="Genomic_DNA"/>
</dbReference>
<dbReference type="PIR" id="D81041">
    <property type="entry name" value="D81041"/>
</dbReference>
<dbReference type="RefSeq" id="NP_274788.1">
    <property type="nucleotide sequence ID" value="NC_003112.2"/>
</dbReference>
<dbReference type="RefSeq" id="WP_002225639.1">
    <property type="nucleotide sequence ID" value="NC_003112.2"/>
</dbReference>
<dbReference type="SMR" id="Q9JY16"/>
<dbReference type="FunCoup" id="Q9JY16">
    <property type="interactions" value="235"/>
</dbReference>
<dbReference type="STRING" id="122586.NMB1789"/>
<dbReference type="PaxDb" id="122586-NMB1789"/>
<dbReference type="KEGG" id="nme:NMB1789"/>
<dbReference type="PATRIC" id="fig|122586.8.peg.2277"/>
<dbReference type="HOGENOM" id="CLU_111574_1_0_4"/>
<dbReference type="InParanoid" id="Q9JY16"/>
<dbReference type="OrthoDB" id="9795145at2"/>
<dbReference type="Proteomes" id="UP000000425">
    <property type="component" value="Chromosome"/>
</dbReference>
<dbReference type="GO" id="GO:0005737">
    <property type="term" value="C:cytoplasm"/>
    <property type="evidence" value="ECO:0007669"/>
    <property type="project" value="UniProtKB-SubCell"/>
</dbReference>
<dbReference type="GO" id="GO:0051082">
    <property type="term" value="F:unfolded protein binding"/>
    <property type="evidence" value="ECO:0007669"/>
    <property type="project" value="InterPro"/>
</dbReference>
<dbReference type="GO" id="GO:0006457">
    <property type="term" value="P:protein folding"/>
    <property type="evidence" value="ECO:0007669"/>
    <property type="project" value="UniProtKB-UniRule"/>
</dbReference>
<dbReference type="GO" id="GO:0051262">
    <property type="term" value="P:protein tetramerization"/>
    <property type="evidence" value="ECO:0007669"/>
    <property type="project" value="InterPro"/>
</dbReference>
<dbReference type="GO" id="GO:0015031">
    <property type="term" value="P:protein transport"/>
    <property type="evidence" value="ECO:0007669"/>
    <property type="project" value="UniProtKB-UniRule"/>
</dbReference>
<dbReference type="Gene3D" id="3.10.420.10">
    <property type="entry name" value="SecB-like"/>
    <property type="match status" value="1"/>
</dbReference>
<dbReference type="HAMAP" id="MF_00821">
    <property type="entry name" value="SecB"/>
    <property type="match status" value="1"/>
</dbReference>
<dbReference type="InterPro" id="IPR003708">
    <property type="entry name" value="SecB"/>
</dbReference>
<dbReference type="InterPro" id="IPR035958">
    <property type="entry name" value="SecB-like_sf"/>
</dbReference>
<dbReference type="NCBIfam" id="NF004394">
    <property type="entry name" value="PRK05751.1-5"/>
    <property type="match status" value="1"/>
</dbReference>
<dbReference type="NCBIfam" id="TIGR00809">
    <property type="entry name" value="secB"/>
    <property type="match status" value="1"/>
</dbReference>
<dbReference type="PANTHER" id="PTHR36918">
    <property type="match status" value="1"/>
</dbReference>
<dbReference type="PANTHER" id="PTHR36918:SF1">
    <property type="entry name" value="PROTEIN-EXPORT PROTEIN SECB"/>
    <property type="match status" value="1"/>
</dbReference>
<dbReference type="Pfam" id="PF02556">
    <property type="entry name" value="SecB"/>
    <property type="match status" value="1"/>
</dbReference>
<dbReference type="PRINTS" id="PR01594">
    <property type="entry name" value="SECBCHAPRONE"/>
</dbReference>
<dbReference type="SUPFAM" id="SSF54611">
    <property type="entry name" value="SecB-like"/>
    <property type="match status" value="1"/>
</dbReference>
<proteinExistence type="inferred from homology"/>
<accession>Q9JY16</accession>
<feature type="chain" id="PRO_0000055388" description="Protein-export protein SecB">
    <location>
        <begin position="1"/>
        <end position="147"/>
    </location>
</feature>
<organism>
    <name type="scientific">Neisseria meningitidis serogroup B (strain ATCC BAA-335 / MC58)</name>
    <dbReference type="NCBI Taxonomy" id="122586"/>
    <lineage>
        <taxon>Bacteria</taxon>
        <taxon>Pseudomonadati</taxon>
        <taxon>Pseudomonadota</taxon>
        <taxon>Betaproteobacteria</taxon>
        <taxon>Neisseriales</taxon>
        <taxon>Neisseriaceae</taxon>
        <taxon>Neisseria</taxon>
    </lineage>
</organism>
<evidence type="ECO:0000255" key="1">
    <source>
        <dbReference type="HAMAP-Rule" id="MF_00821"/>
    </source>
</evidence>
<keyword id="KW-0143">Chaperone</keyword>
<keyword id="KW-0963">Cytoplasm</keyword>
<keyword id="KW-0653">Protein transport</keyword>
<keyword id="KW-1185">Reference proteome</keyword>
<keyword id="KW-0811">Translocation</keyword>
<keyword id="KW-0813">Transport</keyword>
<name>SECB_NEIMB</name>
<gene>
    <name evidence="1" type="primary">secB</name>
    <name type="ordered locus">NMB1789</name>
</gene>
<comment type="function">
    <text evidence="1">One of the proteins required for the normal export of preproteins out of the cell cytoplasm. It is a molecular chaperone that binds to a subset of precursor proteins, maintaining them in a translocation-competent state. It also specifically binds to its receptor SecA.</text>
</comment>
<comment type="subunit">
    <text evidence="1">Homotetramer, a dimer of dimers. One homotetramer interacts with 1 SecA dimer.</text>
</comment>
<comment type="subcellular location">
    <subcellularLocation>
        <location evidence="1">Cytoplasm</location>
    </subcellularLocation>
</comment>
<comment type="similarity">
    <text evidence="1">Belongs to the SecB family.</text>
</comment>
<sequence length="147" mass="16319">MSEELQPVFSIERLYVKDLSLEVPHAPQIFLEQGEPEVEMRVSTGSQKLEDGYYNVDVTVTVTAKLDNERTMFLNEVTQSGIFRLENIPEEDADLLLGVACPNILFPYAREAVSGTVTRAGFPPVLLAPINFEAIYQQQQEAEAAGA</sequence>
<reference key="1">
    <citation type="journal article" date="2000" name="Science">
        <title>Complete genome sequence of Neisseria meningitidis serogroup B strain MC58.</title>
        <authorList>
            <person name="Tettelin H."/>
            <person name="Saunders N.J."/>
            <person name="Heidelberg J.F."/>
            <person name="Jeffries A.C."/>
            <person name="Nelson K.E."/>
            <person name="Eisen J.A."/>
            <person name="Ketchum K.A."/>
            <person name="Hood D.W."/>
            <person name="Peden J.F."/>
            <person name="Dodson R.J."/>
            <person name="Nelson W.C."/>
            <person name="Gwinn M.L."/>
            <person name="DeBoy R.T."/>
            <person name="Peterson J.D."/>
            <person name="Hickey E.K."/>
            <person name="Haft D.H."/>
            <person name="Salzberg S.L."/>
            <person name="White O."/>
            <person name="Fleischmann R.D."/>
            <person name="Dougherty B.A."/>
            <person name="Mason T.M."/>
            <person name="Ciecko A."/>
            <person name="Parksey D.S."/>
            <person name="Blair E."/>
            <person name="Cittone H."/>
            <person name="Clark E.B."/>
            <person name="Cotton M.D."/>
            <person name="Utterback T.R."/>
            <person name="Khouri H.M."/>
            <person name="Qin H."/>
            <person name="Vamathevan J.J."/>
            <person name="Gill J."/>
            <person name="Scarlato V."/>
            <person name="Masignani V."/>
            <person name="Pizza M."/>
            <person name="Grandi G."/>
            <person name="Sun L."/>
            <person name="Smith H.O."/>
            <person name="Fraser C.M."/>
            <person name="Moxon E.R."/>
            <person name="Rappuoli R."/>
            <person name="Venter J.C."/>
        </authorList>
    </citation>
    <scope>NUCLEOTIDE SEQUENCE [LARGE SCALE GENOMIC DNA]</scope>
    <source>
        <strain>ATCC BAA-335 / MC58</strain>
    </source>
</reference>
<protein>
    <recommendedName>
        <fullName evidence="1">Protein-export protein SecB</fullName>
    </recommendedName>
</protein>